<protein>
    <recommendedName>
        <fullName evidence="1">RNA pyrophosphohydrolase</fullName>
        <ecNumber evidence="1">3.6.1.-</ecNumber>
    </recommendedName>
    <alternativeName>
        <fullName evidence="1">(Di)nucleoside polyphosphate hydrolase</fullName>
    </alternativeName>
</protein>
<comment type="function">
    <text evidence="1">Accelerates the degradation of transcripts by removing pyrophosphate from the 5'-end of triphosphorylated RNA, leading to a more labile monophosphorylated state that can stimulate subsequent ribonuclease cleavage.</text>
</comment>
<comment type="cofactor">
    <cofactor evidence="1">
        <name>a divalent metal cation</name>
        <dbReference type="ChEBI" id="CHEBI:60240"/>
    </cofactor>
</comment>
<comment type="similarity">
    <text evidence="1">Belongs to the Nudix hydrolase family. RppH subfamily.</text>
</comment>
<proteinExistence type="inferred from homology"/>
<dbReference type="EC" id="3.6.1.-" evidence="1"/>
<dbReference type="EMBL" id="CP000608">
    <property type="protein sequence ID" value="ABO46215.1"/>
    <property type="molecule type" value="Genomic_DNA"/>
</dbReference>
<dbReference type="RefSeq" id="WP_003017197.1">
    <property type="nucleotide sequence ID" value="NC_009257.1"/>
</dbReference>
<dbReference type="SMR" id="A4IWB3"/>
<dbReference type="KEGG" id="ftw:FTW_0251"/>
<dbReference type="HOGENOM" id="CLU_087195_3_1_6"/>
<dbReference type="GO" id="GO:0016462">
    <property type="term" value="F:pyrophosphatase activity"/>
    <property type="evidence" value="ECO:0007669"/>
    <property type="project" value="UniProtKB-ARBA"/>
</dbReference>
<dbReference type="CDD" id="cd03671">
    <property type="entry name" value="NUDIX_Ap4A_hydrolase_plant_like"/>
    <property type="match status" value="1"/>
</dbReference>
<dbReference type="Gene3D" id="3.90.79.10">
    <property type="entry name" value="Nucleoside Triphosphate Pyrophosphohydrolase"/>
    <property type="match status" value="1"/>
</dbReference>
<dbReference type="HAMAP" id="MF_00298">
    <property type="entry name" value="Nudix_RppH"/>
    <property type="match status" value="1"/>
</dbReference>
<dbReference type="InterPro" id="IPR020476">
    <property type="entry name" value="Nudix_hydrolase"/>
</dbReference>
<dbReference type="InterPro" id="IPR015797">
    <property type="entry name" value="NUDIX_hydrolase-like_dom_sf"/>
</dbReference>
<dbReference type="InterPro" id="IPR020084">
    <property type="entry name" value="NUDIX_hydrolase_CS"/>
</dbReference>
<dbReference type="InterPro" id="IPR000086">
    <property type="entry name" value="NUDIX_hydrolase_dom"/>
</dbReference>
<dbReference type="InterPro" id="IPR022927">
    <property type="entry name" value="RppH"/>
</dbReference>
<dbReference type="NCBIfam" id="NF001936">
    <property type="entry name" value="PRK00714.1-3"/>
    <property type="match status" value="1"/>
</dbReference>
<dbReference type="NCBIfam" id="NF001937">
    <property type="entry name" value="PRK00714.1-4"/>
    <property type="match status" value="1"/>
</dbReference>
<dbReference type="NCBIfam" id="NF001938">
    <property type="entry name" value="PRK00714.1-5"/>
    <property type="match status" value="1"/>
</dbReference>
<dbReference type="PANTHER" id="PTHR43736">
    <property type="entry name" value="ADP-RIBOSE PYROPHOSPHATASE"/>
    <property type="match status" value="1"/>
</dbReference>
<dbReference type="PANTHER" id="PTHR43736:SF1">
    <property type="entry name" value="DIHYDRONEOPTERIN TRIPHOSPHATE DIPHOSPHATASE"/>
    <property type="match status" value="1"/>
</dbReference>
<dbReference type="Pfam" id="PF00293">
    <property type="entry name" value="NUDIX"/>
    <property type="match status" value="1"/>
</dbReference>
<dbReference type="PRINTS" id="PR00502">
    <property type="entry name" value="NUDIXFAMILY"/>
</dbReference>
<dbReference type="SUPFAM" id="SSF55811">
    <property type="entry name" value="Nudix"/>
    <property type="match status" value="1"/>
</dbReference>
<dbReference type="PROSITE" id="PS51462">
    <property type="entry name" value="NUDIX"/>
    <property type="match status" value="1"/>
</dbReference>
<dbReference type="PROSITE" id="PS00893">
    <property type="entry name" value="NUDIX_BOX"/>
    <property type="match status" value="1"/>
</dbReference>
<evidence type="ECO:0000255" key="1">
    <source>
        <dbReference type="HAMAP-Rule" id="MF_00298"/>
    </source>
</evidence>
<feature type="chain" id="PRO_1000021948" description="RNA pyrophosphohydrolase">
    <location>
        <begin position="1"/>
        <end position="155"/>
    </location>
</feature>
<feature type="domain" description="Nudix hydrolase" evidence="1">
    <location>
        <begin position="6"/>
        <end position="148"/>
    </location>
</feature>
<feature type="short sequence motif" description="Nudix box">
    <location>
        <begin position="38"/>
        <end position="59"/>
    </location>
</feature>
<keyword id="KW-0378">Hydrolase</keyword>
<organism>
    <name type="scientific">Francisella tularensis subsp. tularensis (strain WY96-3418)</name>
    <dbReference type="NCBI Taxonomy" id="418136"/>
    <lineage>
        <taxon>Bacteria</taxon>
        <taxon>Pseudomonadati</taxon>
        <taxon>Pseudomonadota</taxon>
        <taxon>Gammaproteobacteria</taxon>
        <taxon>Thiotrichales</taxon>
        <taxon>Francisellaceae</taxon>
        <taxon>Francisella</taxon>
    </lineage>
</organism>
<sequence>MIDKSGYRANVAIVLLNKQNRVFWGQRRNRTSWQFPQGGVATGETPLQAMYRELHEEIGLRPQDVEVIASTRDWYKYDIPDSLVRTKEPICIGQKQKWFLLKLKSPESYIDLDANDSPEFDNWRWVSYWYPINHVVYFKQEVYRKALTYFKEYIA</sequence>
<name>RPPH_FRATW</name>
<gene>
    <name evidence="1" type="primary">rppH</name>
    <name evidence="1" type="synonym">nudH</name>
    <name type="ordered locus">FTW_0251</name>
</gene>
<reference key="1">
    <citation type="journal article" date="2007" name="PLoS ONE">
        <title>Complete genomic characterization of a pathogenic A.II strain of Francisella tularensis subspecies tularensis.</title>
        <authorList>
            <person name="Beckstrom-Sternberg S.M."/>
            <person name="Auerbach R.K."/>
            <person name="Godbole S."/>
            <person name="Pearson J.V."/>
            <person name="Beckstrom-Sternberg J.S."/>
            <person name="Deng Z."/>
            <person name="Munk C."/>
            <person name="Kubota K."/>
            <person name="Zhou Y."/>
            <person name="Bruce D."/>
            <person name="Noronha J."/>
            <person name="Scheuermann R.H."/>
            <person name="Wang A."/>
            <person name="Wei X."/>
            <person name="Wang J."/>
            <person name="Hao J."/>
            <person name="Wagner D.M."/>
            <person name="Brettin T.S."/>
            <person name="Brown N."/>
            <person name="Gilna P."/>
            <person name="Keim P.S."/>
        </authorList>
    </citation>
    <scope>NUCLEOTIDE SEQUENCE [LARGE SCALE GENOMIC DNA]</scope>
    <source>
        <strain>WY96-3418</strain>
    </source>
</reference>
<accession>A4IWB3</accession>